<gene>
    <name evidence="1" type="primary">mraY</name>
    <name type="ordered locus">spr0305</name>
</gene>
<proteinExistence type="inferred from homology"/>
<sequence length="326" mass="36063">MFISISAGIVTFLLTLVGIPAFIQFYRKAQITGQQMHEDVKQHQAKAGTPTMGGLVFLITSVLVAFFFALFSSQFSNNVGMILFILVLYGLVGFLDDFLKVFRKINEGLNPKQKLALQLLGGVIFYLFYERGGDILSVFGYPVHLGFFYIFFALFWLVGFSNAVNLTDGVDGLASISVVISLFAYGVIAYVQGQMDILLVILAMIGGLLGFFIFNHKPAKVFMGDVGSLALGGMLAAISMALHQEWTLLIIGIVYVFETTSVMMQVSYFKLTGGKRIFRMTPVHHHFELGGLSGKGNPWSEWKVDFFFWGVGLLASLLTLAILYLM</sequence>
<dbReference type="EC" id="2.7.8.13" evidence="1"/>
<dbReference type="EMBL" id="AE007317">
    <property type="protein sequence ID" value="AAK99109.1"/>
    <property type="molecule type" value="Genomic_DNA"/>
</dbReference>
<dbReference type="PIR" id="A97910">
    <property type="entry name" value="A97910"/>
</dbReference>
<dbReference type="RefSeq" id="NP_357899.1">
    <property type="nucleotide sequence ID" value="NC_003098.1"/>
</dbReference>
<dbReference type="RefSeq" id="WP_000470833.1">
    <property type="nucleotide sequence ID" value="NC_003098.1"/>
</dbReference>
<dbReference type="SMR" id="Q8DR69"/>
<dbReference type="STRING" id="171101.spr0305"/>
<dbReference type="KEGG" id="spr:spr0305"/>
<dbReference type="PATRIC" id="fig|171101.6.peg.342"/>
<dbReference type="eggNOG" id="COG0472">
    <property type="taxonomic scope" value="Bacteria"/>
</dbReference>
<dbReference type="HOGENOM" id="CLU_023982_0_1_9"/>
<dbReference type="UniPathway" id="UPA00219"/>
<dbReference type="Proteomes" id="UP000000586">
    <property type="component" value="Chromosome"/>
</dbReference>
<dbReference type="GO" id="GO:0005886">
    <property type="term" value="C:plasma membrane"/>
    <property type="evidence" value="ECO:0000318"/>
    <property type="project" value="GO_Central"/>
</dbReference>
<dbReference type="GO" id="GO:0046872">
    <property type="term" value="F:metal ion binding"/>
    <property type="evidence" value="ECO:0007669"/>
    <property type="project" value="UniProtKB-KW"/>
</dbReference>
<dbReference type="GO" id="GO:0008963">
    <property type="term" value="F:phospho-N-acetylmuramoyl-pentapeptide-transferase activity"/>
    <property type="evidence" value="ECO:0007669"/>
    <property type="project" value="UniProtKB-UniRule"/>
</dbReference>
<dbReference type="GO" id="GO:0016780">
    <property type="term" value="F:phosphotransferase activity, for other substituted phosphate groups"/>
    <property type="evidence" value="ECO:0000318"/>
    <property type="project" value="GO_Central"/>
</dbReference>
<dbReference type="GO" id="GO:0051301">
    <property type="term" value="P:cell division"/>
    <property type="evidence" value="ECO:0007669"/>
    <property type="project" value="UniProtKB-KW"/>
</dbReference>
<dbReference type="GO" id="GO:0044038">
    <property type="term" value="P:cell wall macromolecule biosynthetic process"/>
    <property type="evidence" value="ECO:0000318"/>
    <property type="project" value="GO_Central"/>
</dbReference>
<dbReference type="GO" id="GO:0071555">
    <property type="term" value="P:cell wall organization"/>
    <property type="evidence" value="ECO:0000318"/>
    <property type="project" value="GO_Central"/>
</dbReference>
<dbReference type="GO" id="GO:0009252">
    <property type="term" value="P:peptidoglycan biosynthetic process"/>
    <property type="evidence" value="ECO:0007669"/>
    <property type="project" value="UniProtKB-UniRule"/>
</dbReference>
<dbReference type="GO" id="GO:0008360">
    <property type="term" value="P:regulation of cell shape"/>
    <property type="evidence" value="ECO:0007669"/>
    <property type="project" value="UniProtKB-KW"/>
</dbReference>
<dbReference type="CDD" id="cd06852">
    <property type="entry name" value="GT_MraY"/>
    <property type="match status" value="1"/>
</dbReference>
<dbReference type="HAMAP" id="MF_00038">
    <property type="entry name" value="MraY"/>
    <property type="match status" value="1"/>
</dbReference>
<dbReference type="InterPro" id="IPR000715">
    <property type="entry name" value="Glycosyl_transferase_4"/>
</dbReference>
<dbReference type="InterPro" id="IPR003524">
    <property type="entry name" value="PNAcMuramoyl-5peptid_Trfase"/>
</dbReference>
<dbReference type="InterPro" id="IPR018480">
    <property type="entry name" value="PNAcMuramoyl-5peptid_Trfase_CS"/>
</dbReference>
<dbReference type="NCBIfam" id="TIGR00445">
    <property type="entry name" value="mraY"/>
    <property type="match status" value="1"/>
</dbReference>
<dbReference type="PANTHER" id="PTHR22926">
    <property type="entry name" value="PHOSPHO-N-ACETYLMURAMOYL-PENTAPEPTIDE-TRANSFERASE"/>
    <property type="match status" value="1"/>
</dbReference>
<dbReference type="PANTHER" id="PTHR22926:SF5">
    <property type="entry name" value="PHOSPHO-N-ACETYLMURAMOYL-PENTAPEPTIDE-TRANSFERASE HOMOLOG"/>
    <property type="match status" value="1"/>
</dbReference>
<dbReference type="Pfam" id="PF00953">
    <property type="entry name" value="Glycos_transf_4"/>
    <property type="match status" value="1"/>
</dbReference>
<dbReference type="Pfam" id="PF10555">
    <property type="entry name" value="MraY_sig1"/>
    <property type="match status" value="1"/>
</dbReference>
<dbReference type="PROSITE" id="PS01347">
    <property type="entry name" value="MRAY_1"/>
    <property type="match status" value="1"/>
</dbReference>
<dbReference type="PROSITE" id="PS01348">
    <property type="entry name" value="MRAY_2"/>
    <property type="match status" value="1"/>
</dbReference>
<reference key="1">
    <citation type="journal article" date="2001" name="J. Bacteriol.">
        <title>Genome of the bacterium Streptococcus pneumoniae strain R6.</title>
        <authorList>
            <person name="Hoskins J."/>
            <person name="Alborn W.E. Jr."/>
            <person name="Arnold J."/>
            <person name="Blaszczak L.C."/>
            <person name="Burgett S."/>
            <person name="DeHoff B.S."/>
            <person name="Estrem S.T."/>
            <person name="Fritz L."/>
            <person name="Fu D.-J."/>
            <person name="Fuller W."/>
            <person name="Geringer C."/>
            <person name="Gilmour R."/>
            <person name="Glass J.S."/>
            <person name="Khoja H."/>
            <person name="Kraft A.R."/>
            <person name="Lagace R.E."/>
            <person name="LeBlanc D.J."/>
            <person name="Lee L.N."/>
            <person name="Lefkowitz E.J."/>
            <person name="Lu J."/>
            <person name="Matsushima P."/>
            <person name="McAhren S.M."/>
            <person name="McHenney M."/>
            <person name="McLeaster K."/>
            <person name="Mundy C.W."/>
            <person name="Nicas T.I."/>
            <person name="Norris F.H."/>
            <person name="O'Gara M."/>
            <person name="Peery R.B."/>
            <person name="Robertson G.T."/>
            <person name="Rockey P."/>
            <person name="Sun P.-M."/>
            <person name="Winkler M.E."/>
            <person name="Yang Y."/>
            <person name="Young-Bellido M."/>
            <person name="Zhao G."/>
            <person name="Zook C.A."/>
            <person name="Baltz R.H."/>
            <person name="Jaskunas S.R."/>
            <person name="Rosteck P.R. Jr."/>
            <person name="Skatrud P.L."/>
            <person name="Glass J.I."/>
        </authorList>
    </citation>
    <scope>NUCLEOTIDE SEQUENCE [LARGE SCALE GENOMIC DNA]</scope>
    <source>
        <strain>ATCC BAA-255 / R6</strain>
    </source>
</reference>
<accession>Q8DR69</accession>
<comment type="function">
    <text evidence="1">Catalyzes the initial step of the lipid cycle reactions in the biosynthesis of the cell wall peptidoglycan: transfers peptidoglycan precursor phospho-MurNAc-pentapeptide from UDP-MurNAc-pentapeptide onto the lipid carrier undecaprenyl phosphate, yielding undecaprenyl-pyrophosphoryl-MurNAc-pentapeptide, known as lipid I.</text>
</comment>
<comment type="catalytic activity">
    <reaction evidence="1">
        <text>UDP-N-acetyl-alpha-D-muramoyl-L-alanyl-gamma-D-glutamyl-L-lysyl-D-alanyl-D-alanine + di-trans,octa-cis-undecaprenyl phosphate = Mur2Ac(oyl-L-Ala-gamma-D-Glu-L-Lys-D-Ala-D-Ala)-di-trans,octa-cis-undecaprenyl diphosphate + UMP</text>
        <dbReference type="Rhea" id="RHEA:21920"/>
        <dbReference type="ChEBI" id="CHEBI:57865"/>
        <dbReference type="ChEBI" id="CHEBI:60032"/>
        <dbReference type="ChEBI" id="CHEBI:60392"/>
        <dbReference type="ChEBI" id="CHEBI:70758"/>
        <dbReference type="EC" id="2.7.8.13"/>
    </reaction>
</comment>
<comment type="cofactor">
    <cofactor evidence="1">
        <name>Mg(2+)</name>
        <dbReference type="ChEBI" id="CHEBI:18420"/>
    </cofactor>
</comment>
<comment type="pathway">
    <text evidence="1">Cell wall biogenesis; peptidoglycan biosynthesis.</text>
</comment>
<comment type="subcellular location">
    <subcellularLocation>
        <location evidence="1">Cell membrane</location>
        <topology evidence="1">Multi-pass membrane protein</topology>
    </subcellularLocation>
</comment>
<comment type="similarity">
    <text evidence="1">Belongs to the glycosyltransferase 4 family. MraY subfamily.</text>
</comment>
<feature type="chain" id="PRO_0000108905" description="Phospho-N-acetylmuramoyl-pentapeptide-transferase">
    <location>
        <begin position="1"/>
        <end position="326"/>
    </location>
</feature>
<feature type="transmembrane region" description="Helical" evidence="1">
    <location>
        <begin position="3"/>
        <end position="23"/>
    </location>
</feature>
<feature type="transmembrane region" description="Helical" evidence="1">
    <location>
        <begin position="51"/>
        <end position="71"/>
    </location>
</feature>
<feature type="transmembrane region" description="Helical" evidence="1">
    <location>
        <begin position="79"/>
        <end position="99"/>
    </location>
</feature>
<feature type="transmembrane region" description="Helical" evidence="1">
    <location>
        <begin position="115"/>
        <end position="135"/>
    </location>
</feature>
<feature type="transmembrane region" description="Helical" evidence="1">
    <location>
        <begin position="138"/>
        <end position="158"/>
    </location>
</feature>
<feature type="transmembrane region" description="Helical" evidence="1">
    <location>
        <begin position="169"/>
        <end position="189"/>
    </location>
</feature>
<feature type="transmembrane region" description="Helical" evidence="1">
    <location>
        <begin position="195"/>
        <end position="215"/>
    </location>
</feature>
<feature type="transmembrane region" description="Helical" evidence="1">
    <location>
        <begin position="221"/>
        <end position="243"/>
    </location>
</feature>
<feature type="transmembrane region" description="Helical" evidence="1">
    <location>
        <begin position="306"/>
        <end position="326"/>
    </location>
</feature>
<keyword id="KW-0131">Cell cycle</keyword>
<keyword id="KW-0132">Cell division</keyword>
<keyword id="KW-1003">Cell membrane</keyword>
<keyword id="KW-0133">Cell shape</keyword>
<keyword id="KW-0961">Cell wall biogenesis/degradation</keyword>
<keyword id="KW-0460">Magnesium</keyword>
<keyword id="KW-0472">Membrane</keyword>
<keyword id="KW-0479">Metal-binding</keyword>
<keyword id="KW-0573">Peptidoglycan synthesis</keyword>
<keyword id="KW-1185">Reference proteome</keyword>
<keyword id="KW-0808">Transferase</keyword>
<keyword id="KW-0812">Transmembrane</keyword>
<keyword id="KW-1133">Transmembrane helix</keyword>
<organism>
    <name type="scientific">Streptococcus pneumoniae (strain ATCC BAA-255 / R6)</name>
    <dbReference type="NCBI Taxonomy" id="171101"/>
    <lineage>
        <taxon>Bacteria</taxon>
        <taxon>Bacillati</taxon>
        <taxon>Bacillota</taxon>
        <taxon>Bacilli</taxon>
        <taxon>Lactobacillales</taxon>
        <taxon>Streptococcaceae</taxon>
        <taxon>Streptococcus</taxon>
    </lineage>
</organism>
<protein>
    <recommendedName>
        <fullName evidence="1">Phospho-N-acetylmuramoyl-pentapeptide-transferase</fullName>
        <ecNumber evidence="1">2.7.8.13</ecNumber>
    </recommendedName>
    <alternativeName>
        <fullName evidence="1">UDP-MurNAc-pentapeptide phosphotransferase</fullName>
    </alternativeName>
</protein>
<name>MRAY_STRR6</name>
<evidence type="ECO:0000255" key="1">
    <source>
        <dbReference type="HAMAP-Rule" id="MF_00038"/>
    </source>
</evidence>